<comment type="function">
    <text evidence="9">Serine/threonine-protein kinase involved in regulation of lymphocyte migration. Phosphorylates MSN, and possibly PLK1. Involved in regulation of lymphocyte migration by mediating phosphorylation of ERM proteins such as MSN. Acts as a negative regulator of MAP3K1/MEKK1. May also act as a cell cycle regulator by acting as a polo kinase kinase: mediates phosphorylation of PLK1 in vitro; however such data require additional evidences in vivo.</text>
</comment>
<comment type="catalytic activity">
    <reaction>
        <text>L-seryl-[protein] + ATP = O-phospho-L-seryl-[protein] + ADP + H(+)</text>
        <dbReference type="Rhea" id="RHEA:17989"/>
        <dbReference type="Rhea" id="RHEA-COMP:9863"/>
        <dbReference type="Rhea" id="RHEA-COMP:11604"/>
        <dbReference type="ChEBI" id="CHEBI:15378"/>
        <dbReference type="ChEBI" id="CHEBI:29999"/>
        <dbReference type="ChEBI" id="CHEBI:30616"/>
        <dbReference type="ChEBI" id="CHEBI:83421"/>
        <dbReference type="ChEBI" id="CHEBI:456216"/>
        <dbReference type="EC" id="2.7.11.1"/>
    </reaction>
</comment>
<comment type="catalytic activity">
    <reaction>
        <text>L-threonyl-[protein] + ATP = O-phospho-L-threonyl-[protein] + ADP + H(+)</text>
        <dbReference type="Rhea" id="RHEA:46608"/>
        <dbReference type="Rhea" id="RHEA-COMP:11060"/>
        <dbReference type="Rhea" id="RHEA-COMP:11605"/>
        <dbReference type="ChEBI" id="CHEBI:15378"/>
        <dbReference type="ChEBI" id="CHEBI:30013"/>
        <dbReference type="ChEBI" id="CHEBI:30616"/>
        <dbReference type="ChEBI" id="CHEBI:61977"/>
        <dbReference type="ChEBI" id="CHEBI:456216"/>
        <dbReference type="EC" id="2.7.11.1"/>
    </reaction>
</comment>
<comment type="activity regulation">
    <text evidence="1">Inhibited by the pyrrole-indolinone inhibitor SU11274 (K00593): intercalates between the ATP-binding Lys-65 and alpha-C glutamate (Glu-81), resulting in a partial disordering of the lysine side chain. Also specifically inhibited by erlotinib. Slightly inhibited by gefitinib (By similarity).</text>
</comment>
<comment type="subunit">
    <text evidence="1">Homodimer; homodimerization is required for activation segment autophosphorylation.</text>
</comment>
<comment type="subcellular location">
    <subcellularLocation>
        <location evidence="1">Cell membrane</location>
        <topology evidence="1">Peripheral membrane protein</topology>
    </subcellularLocation>
</comment>
<comment type="tissue specificity">
    <text>Expressed predominantly in lymphoid organs such as spleen, thymus, and bone marrow.</text>
</comment>
<comment type="PTM">
    <text evidence="1">Autophosphorylates following homodimerization, leading to activation of the protein.</text>
</comment>
<comment type="disruption phenotype">
    <text evidence="8 9">Mice do not show any obvious abnormalities. Lymphocytes develop normally but activated lymphocytes show enhanced cell adhesion. Decreased phosphorylation of ERM proteins.</text>
</comment>
<comment type="similarity">
    <text evidence="10">Belongs to the protein kinase superfamily. STE Ser/Thr protein kinase family. STE20 subfamily.</text>
</comment>
<gene>
    <name type="primary">Stk10</name>
    <name type="synonym">Lok</name>
</gene>
<accession>O55098</accession>
<accession>B1ATW8</accession>
<organism>
    <name type="scientific">Mus musculus</name>
    <name type="common">Mouse</name>
    <dbReference type="NCBI Taxonomy" id="10090"/>
    <lineage>
        <taxon>Eukaryota</taxon>
        <taxon>Metazoa</taxon>
        <taxon>Chordata</taxon>
        <taxon>Craniata</taxon>
        <taxon>Vertebrata</taxon>
        <taxon>Euteleostomi</taxon>
        <taxon>Mammalia</taxon>
        <taxon>Eutheria</taxon>
        <taxon>Euarchontoglires</taxon>
        <taxon>Glires</taxon>
        <taxon>Rodentia</taxon>
        <taxon>Myomorpha</taxon>
        <taxon>Muroidea</taxon>
        <taxon>Muridae</taxon>
        <taxon>Murinae</taxon>
        <taxon>Mus</taxon>
        <taxon>Mus</taxon>
    </lineage>
</organism>
<feature type="chain" id="PRO_0000086698" description="Serine/threonine-protein kinase 10">
    <location>
        <begin position="1"/>
        <end position="966"/>
    </location>
</feature>
<feature type="domain" description="Protein kinase" evidence="5">
    <location>
        <begin position="36"/>
        <end position="294"/>
    </location>
</feature>
<feature type="region of interest" description="Activation segment" evidence="1">
    <location>
        <begin position="175"/>
        <end position="224"/>
    </location>
</feature>
<feature type="region of interest" description="Disordered" evidence="7">
    <location>
        <begin position="341"/>
        <end position="497"/>
    </location>
</feature>
<feature type="region of interest" description="Disordered" evidence="7">
    <location>
        <begin position="660"/>
        <end position="692"/>
    </location>
</feature>
<feature type="region of interest" description="Disordered" evidence="7">
    <location>
        <begin position="826"/>
        <end position="865"/>
    </location>
</feature>
<feature type="region of interest" description="Disordered" evidence="7">
    <location>
        <begin position="901"/>
        <end position="966"/>
    </location>
</feature>
<feature type="coiled-coil region" evidence="4">
    <location>
        <begin position="588"/>
        <end position="936"/>
    </location>
</feature>
<feature type="compositionally biased region" description="Polar residues" evidence="7">
    <location>
        <begin position="341"/>
        <end position="363"/>
    </location>
</feature>
<feature type="compositionally biased region" description="Polar residues" evidence="7">
    <location>
        <begin position="371"/>
        <end position="392"/>
    </location>
</feature>
<feature type="compositionally biased region" description="Basic and acidic residues" evidence="7">
    <location>
        <begin position="421"/>
        <end position="430"/>
    </location>
</feature>
<feature type="compositionally biased region" description="Polar residues" evidence="7">
    <location>
        <begin position="438"/>
        <end position="456"/>
    </location>
</feature>
<feature type="compositionally biased region" description="Polar residues" evidence="7">
    <location>
        <begin position="485"/>
        <end position="497"/>
    </location>
</feature>
<feature type="compositionally biased region" description="Basic and acidic residues" evidence="7">
    <location>
        <begin position="834"/>
        <end position="865"/>
    </location>
</feature>
<feature type="compositionally biased region" description="Basic and acidic residues" evidence="7">
    <location>
        <begin position="901"/>
        <end position="946"/>
    </location>
</feature>
<feature type="compositionally biased region" description="Polar residues" evidence="7">
    <location>
        <begin position="950"/>
        <end position="966"/>
    </location>
</feature>
<feature type="active site" description="Proton acceptor" evidence="5 6">
    <location>
        <position position="157"/>
    </location>
</feature>
<feature type="binding site" evidence="5">
    <location>
        <begin position="42"/>
        <end position="50"/>
    </location>
    <ligand>
        <name>ATP</name>
        <dbReference type="ChEBI" id="CHEBI:30616"/>
    </ligand>
</feature>
<feature type="binding site" evidence="5">
    <location>
        <position position="65"/>
    </location>
    <ligand>
        <name>ATP</name>
        <dbReference type="ChEBI" id="CHEBI:30616"/>
    </ligand>
</feature>
<feature type="modified residue" description="Phosphoserine" evidence="3">
    <location>
        <position position="13"/>
    </location>
</feature>
<feature type="modified residue" description="Phosphoserine" evidence="2">
    <location>
        <position position="20"/>
    </location>
</feature>
<feature type="modified residue" description="Phosphothreonine; by autocatalysis" evidence="1">
    <location>
        <position position="185"/>
    </location>
</feature>
<feature type="modified residue" description="Phosphoserine" evidence="12">
    <location>
        <position position="191"/>
    </location>
</feature>
<feature type="modified residue" description="Phosphoserine" evidence="3">
    <location>
        <position position="437"/>
    </location>
</feature>
<feature type="modified residue" description="Phosphoserine" evidence="12">
    <location>
        <position position="449"/>
    </location>
</feature>
<feature type="modified residue" description="Phosphoserine" evidence="12">
    <location>
        <position position="453"/>
    </location>
</feature>
<feature type="modified residue" description="Phosphoserine" evidence="3">
    <location>
        <position position="484"/>
    </location>
</feature>
<feature type="modified residue" description="Phosphoserine" evidence="3">
    <location>
        <position position="513"/>
    </location>
</feature>
<feature type="modified residue" description="Phosphoserine" evidence="3">
    <location>
        <position position="548"/>
    </location>
</feature>
<feature type="modified residue" description="Phosphothreonine" evidence="11 12">
    <location>
        <position position="950"/>
    </location>
</feature>
<feature type="sequence conflict" description="In Ref. 1; BAA24073." evidence="10" ref="1">
    <original>SGS</original>
    <variation>NGP</variation>
    <location>
        <begin position="375"/>
        <end position="377"/>
    </location>
</feature>
<feature type="sequence conflict" description="In Ref. 1; BAA24073." evidence="10" ref="1">
    <original>K</original>
    <variation>E</variation>
    <location>
        <position position="814"/>
    </location>
</feature>
<feature type="sequence conflict" description="In Ref. 1; BAA24073." evidence="10" ref="1">
    <original>N</original>
    <variation>H</variation>
    <location>
        <position position="863"/>
    </location>
</feature>
<feature type="sequence conflict" description="In Ref. 1; BAA24073." evidence="10" ref="1">
    <original>H</original>
    <variation>Y</variation>
    <location>
        <position position="888"/>
    </location>
</feature>
<evidence type="ECO:0000250" key="1"/>
<evidence type="ECO:0000250" key="2">
    <source>
        <dbReference type="UniProtKB" id="E9PTG8"/>
    </source>
</evidence>
<evidence type="ECO:0000250" key="3">
    <source>
        <dbReference type="UniProtKB" id="O94804"/>
    </source>
</evidence>
<evidence type="ECO:0000255" key="4"/>
<evidence type="ECO:0000255" key="5">
    <source>
        <dbReference type="PROSITE-ProRule" id="PRU00159"/>
    </source>
</evidence>
<evidence type="ECO:0000255" key="6">
    <source>
        <dbReference type="PROSITE-ProRule" id="PRU10027"/>
    </source>
</evidence>
<evidence type="ECO:0000256" key="7">
    <source>
        <dbReference type="SAM" id="MobiDB-lite"/>
    </source>
</evidence>
<evidence type="ECO:0000269" key="8">
    <source>
    </source>
</evidence>
<evidence type="ECO:0000269" key="9">
    <source>
    </source>
</evidence>
<evidence type="ECO:0000305" key="10"/>
<evidence type="ECO:0007744" key="11">
    <source>
    </source>
</evidence>
<evidence type="ECO:0007744" key="12">
    <source>
    </source>
</evidence>
<dbReference type="EC" id="2.7.11.1"/>
<dbReference type="EMBL" id="D89728">
    <property type="protein sequence ID" value="BAA24073.1"/>
    <property type="molecule type" value="mRNA"/>
</dbReference>
<dbReference type="EMBL" id="AL669844">
    <property type="status" value="NOT_ANNOTATED_CDS"/>
    <property type="molecule type" value="Genomic_DNA"/>
</dbReference>
<dbReference type="CCDS" id="CCDS24529.1"/>
<dbReference type="RefSeq" id="NP_033314.2">
    <property type="nucleotide sequence ID" value="NM_009288.2"/>
</dbReference>
<dbReference type="SMR" id="O55098"/>
<dbReference type="BioGRID" id="203540">
    <property type="interactions" value="3"/>
</dbReference>
<dbReference type="FunCoup" id="O55098">
    <property type="interactions" value="2197"/>
</dbReference>
<dbReference type="IntAct" id="O55098">
    <property type="interactions" value="2"/>
</dbReference>
<dbReference type="STRING" id="10090.ENSMUSP00000099885"/>
<dbReference type="GlyGen" id="O55098">
    <property type="glycosylation" value="2 sites, 1 O-linked glycan (1 site)"/>
</dbReference>
<dbReference type="iPTMnet" id="O55098"/>
<dbReference type="PhosphoSitePlus" id="O55098"/>
<dbReference type="jPOST" id="O55098"/>
<dbReference type="PaxDb" id="10090-ENSMUSP00000099885"/>
<dbReference type="ProteomicsDB" id="257493"/>
<dbReference type="Pumba" id="O55098"/>
<dbReference type="Antibodypedia" id="28880">
    <property type="antibodies" value="279 antibodies from 32 providers"/>
</dbReference>
<dbReference type="DNASU" id="20868"/>
<dbReference type="Ensembl" id="ENSMUST00000102821.4">
    <property type="protein sequence ID" value="ENSMUSP00000099885.4"/>
    <property type="gene ID" value="ENSMUSG00000020272.9"/>
</dbReference>
<dbReference type="GeneID" id="20868"/>
<dbReference type="KEGG" id="mmu:20868"/>
<dbReference type="UCSC" id="uc007ijt.1">
    <property type="organism name" value="mouse"/>
</dbReference>
<dbReference type="AGR" id="MGI:1099439"/>
<dbReference type="CTD" id="6793"/>
<dbReference type="MGI" id="MGI:1099439">
    <property type="gene designation" value="Stk10"/>
</dbReference>
<dbReference type="VEuPathDB" id="HostDB:ENSMUSG00000020272"/>
<dbReference type="eggNOG" id="KOG0579">
    <property type="taxonomic scope" value="Eukaryota"/>
</dbReference>
<dbReference type="GeneTree" id="ENSGT00940000156818"/>
<dbReference type="HOGENOM" id="CLU_001965_3_1_1"/>
<dbReference type="InParanoid" id="O55098"/>
<dbReference type="OMA" id="LATCNHH"/>
<dbReference type="OrthoDB" id="10027016at2759"/>
<dbReference type="PhylomeDB" id="O55098"/>
<dbReference type="TreeFam" id="TF351445"/>
<dbReference type="Reactome" id="R-MMU-6798695">
    <property type="pathway name" value="Neutrophil degranulation"/>
</dbReference>
<dbReference type="Reactome" id="R-MMU-8980692">
    <property type="pathway name" value="RHOA GTPase cycle"/>
</dbReference>
<dbReference type="Reactome" id="R-MMU-9013026">
    <property type="pathway name" value="RHOB GTPase cycle"/>
</dbReference>
<dbReference type="Reactome" id="R-MMU-9013106">
    <property type="pathway name" value="RHOC GTPase cycle"/>
</dbReference>
<dbReference type="BioGRID-ORCS" id="20868">
    <property type="hits" value="1 hit in 80 CRISPR screens"/>
</dbReference>
<dbReference type="ChiTaRS" id="Stk10">
    <property type="organism name" value="mouse"/>
</dbReference>
<dbReference type="PRO" id="PR:O55098"/>
<dbReference type="Proteomes" id="UP000000589">
    <property type="component" value="Chromosome 11"/>
</dbReference>
<dbReference type="RNAct" id="O55098">
    <property type="molecule type" value="protein"/>
</dbReference>
<dbReference type="Bgee" id="ENSMUSG00000020272">
    <property type="expression patterns" value="Expressed in peripheral lymph node and 234 other cell types or tissues"/>
</dbReference>
<dbReference type="GO" id="GO:0016604">
    <property type="term" value="C:nuclear body"/>
    <property type="evidence" value="ECO:0007669"/>
    <property type="project" value="Ensembl"/>
</dbReference>
<dbReference type="GO" id="GO:0005886">
    <property type="term" value="C:plasma membrane"/>
    <property type="evidence" value="ECO:0000250"/>
    <property type="project" value="UniProtKB"/>
</dbReference>
<dbReference type="GO" id="GO:0005524">
    <property type="term" value="F:ATP binding"/>
    <property type="evidence" value="ECO:0007669"/>
    <property type="project" value="UniProtKB-KW"/>
</dbReference>
<dbReference type="GO" id="GO:0042803">
    <property type="term" value="F:protein homodimerization activity"/>
    <property type="evidence" value="ECO:0000250"/>
    <property type="project" value="UniProtKB"/>
</dbReference>
<dbReference type="GO" id="GO:0106310">
    <property type="term" value="F:protein serine kinase activity"/>
    <property type="evidence" value="ECO:0007669"/>
    <property type="project" value="RHEA"/>
</dbReference>
<dbReference type="GO" id="GO:0004674">
    <property type="term" value="F:protein serine/threonine kinase activity"/>
    <property type="evidence" value="ECO:0000250"/>
    <property type="project" value="UniProtKB"/>
</dbReference>
<dbReference type="GO" id="GO:0071593">
    <property type="term" value="P:lymphocyte aggregation"/>
    <property type="evidence" value="ECO:0000315"/>
    <property type="project" value="UniProtKB"/>
</dbReference>
<dbReference type="GO" id="GO:0046777">
    <property type="term" value="P:protein autophosphorylation"/>
    <property type="evidence" value="ECO:0000250"/>
    <property type="project" value="UniProtKB"/>
</dbReference>
<dbReference type="GO" id="GO:2000401">
    <property type="term" value="P:regulation of lymphocyte migration"/>
    <property type="evidence" value="ECO:0000315"/>
    <property type="project" value="UniProtKB"/>
</dbReference>
<dbReference type="CDD" id="cd06644">
    <property type="entry name" value="STKc_STK10"/>
    <property type="match status" value="1"/>
</dbReference>
<dbReference type="FunFam" id="1.10.510.10:FF:000081">
    <property type="entry name" value="STE20-like serine/threonine-protein kinase"/>
    <property type="match status" value="1"/>
</dbReference>
<dbReference type="FunFam" id="3.30.200.20:FF:000120">
    <property type="entry name" value="STE20-like serine/threonine-protein kinase"/>
    <property type="match status" value="1"/>
</dbReference>
<dbReference type="Gene3D" id="3.30.200.20">
    <property type="entry name" value="Phosphorylase Kinase, domain 1"/>
    <property type="match status" value="1"/>
</dbReference>
<dbReference type="Gene3D" id="1.10.510.10">
    <property type="entry name" value="Transferase(Phosphotransferase) domain 1"/>
    <property type="match status" value="1"/>
</dbReference>
<dbReference type="InterPro" id="IPR011009">
    <property type="entry name" value="Kinase-like_dom_sf"/>
</dbReference>
<dbReference type="InterPro" id="IPR022165">
    <property type="entry name" value="PKK"/>
</dbReference>
<dbReference type="InterPro" id="IPR000719">
    <property type="entry name" value="Prot_kinase_dom"/>
</dbReference>
<dbReference type="InterPro" id="IPR017441">
    <property type="entry name" value="Protein_kinase_ATP_BS"/>
</dbReference>
<dbReference type="InterPro" id="IPR008271">
    <property type="entry name" value="Ser/Thr_kinase_AS"/>
</dbReference>
<dbReference type="InterPro" id="IPR051585">
    <property type="entry name" value="STE20_Ser/Thr_Kinases"/>
</dbReference>
<dbReference type="InterPro" id="IPR042743">
    <property type="entry name" value="STK10_STKc"/>
</dbReference>
<dbReference type="PANTHER" id="PTHR46538:SF2">
    <property type="entry name" value="NON-SPECIFIC SERINE_THREONINE PROTEIN KINASE"/>
    <property type="match status" value="1"/>
</dbReference>
<dbReference type="PANTHER" id="PTHR46538">
    <property type="entry name" value="PROTEIN KINASE DOMAIN-CONTAINING PROTEIN"/>
    <property type="match status" value="1"/>
</dbReference>
<dbReference type="Pfam" id="PF00069">
    <property type="entry name" value="Pkinase"/>
    <property type="match status" value="1"/>
</dbReference>
<dbReference type="Pfam" id="PF12474">
    <property type="entry name" value="PKK"/>
    <property type="match status" value="2"/>
</dbReference>
<dbReference type="SMART" id="SM00220">
    <property type="entry name" value="S_TKc"/>
    <property type="match status" value="1"/>
</dbReference>
<dbReference type="SUPFAM" id="SSF56112">
    <property type="entry name" value="Protein kinase-like (PK-like)"/>
    <property type="match status" value="1"/>
</dbReference>
<dbReference type="PROSITE" id="PS00107">
    <property type="entry name" value="PROTEIN_KINASE_ATP"/>
    <property type="match status" value="1"/>
</dbReference>
<dbReference type="PROSITE" id="PS50011">
    <property type="entry name" value="PROTEIN_KINASE_DOM"/>
    <property type="match status" value="1"/>
</dbReference>
<dbReference type="PROSITE" id="PS00108">
    <property type="entry name" value="PROTEIN_KINASE_ST"/>
    <property type="match status" value="1"/>
</dbReference>
<name>STK10_MOUSE</name>
<proteinExistence type="evidence at protein level"/>
<sequence length="966" mass="111906">MAFANFRRILRLSTFEKRKSREYEHVRRDLDPNDVWEIVGELGDGAFGKVYKAKNKETGALAAAKVIETKSEEELEDYIVEIEILATCDHPYIVKLLGAYYYDGKLWIMIEFCPGGAVDAIMLELDRGLTEPQIQVVCRQMLEALNFLHGKRIIHRDLKAGNVLMTLEGDIRLADFGVSAKNLKTLQKRDSFIGTPYWMAPEVVLCETMKDAPYDYKADIWSLGITLIEMAQIEPPHHELNPMRVLLKIAKSDPPTLLTPSKWSVEFRDFLKIALDKNPETRPSAAQLLQHPFVSRVTSNKALRELVAEAKAEVMEEIEDGREDGEEEDAVDAVPPLVNHTQDSANVTQPSLDSNKLLQDSSTPLPPSQPQEPVSGSCSQPSGDGPLQTTSPADGLSKNDNDLKVPVPLRKSRPLSMDARIQMDEEKQIPDQDENPSPAASKSQKANQSRPNSSALETLGGEALTNGGLELPSSVTPSHSKRASDCSNLSTSESMDYGTSLSADLSLNKETGSLSLKGSKLHNKTLKRTRRFVVDGVEVSITTSKIISEDEKKDEEMRFLRRQELRELRLLQKEEHRNQTQLSSKHELQLEQMHKRFEQEINAKKKFYDVELENLERQQKQQVEKMEQDHSVRRKEEAKRIRLEQDRDYAKFQEQLKQMKKEVKSEVEKLPRQQRKESMKQKMEEHSQKKQRLDRDFVAKQKEDLELAMRKLTTENRREICDKERDCLSKKQELLRDREAALWEMEEHQLQERHQLVKQQLKDQYFLQRHDLLRKHEKEREQMQRYNQRMMEQLKVRQQQEKARLPKIQRSDGKTRMAMYKKSLHINGAGSASEQREKIKQFSQQEEKRQKAERLQQQQKHENQMRDMVAQCESNMSELQQLQNEKCHLLVEHETQKLKALDESHNQSLKEWRDKLRPRKKALEEDLNQKKREQEMFFKLSEEAEPRPTTPSKASNFFPYSSGDAS</sequence>
<protein>
    <recommendedName>
        <fullName>Serine/threonine-protein kinase 10</fullName>
        <ecNumber>2.7.11.1</ecNumber>
    </recommendedName>
    <alternativeName>
        <fullName>Lymphocyte-oriented kinase</fullName>
    </alternativeName>
</protein>
<reference key="1">
    <citation type="journal article" date="1997" name="J. Biol. Chem.">
        <title>LOK is a novel mouse STE20-like protein kinase that is expressed predominantly in lymphocytes.</title>
        <authorList>
            <person name="Kuramochi S."/>
            <person name="Moriguchi T."/>
            <person name="Kuida K."/>
            <person name="Endo J."/>
            <person name="Semba K."/>
            <person name="Nishida E."/>
            <person name="Karasuyama H."/>
        </authorList>
    </citation>
    <scope>NUCLEOTIDE SEQUENCE [MRNA]</scope>
    <source>
        <tissue>Thymus</tissue>
    </source>
</reference>
<reference key="2">
    <citation type="journal article" date="2009" name="PLoS Biol.">
        <title>Lineage-specific biology revealed by a finished genome assembly of the mouse.</title>
        <authorList>
            <person name="Church D.M."/>
            <person name="Goodstadt L."/>
            <person name="Hillier L.W."/>
            <person name="Zody M.C."/>
            <person name="Goldstein S."/>
            <person name="She X."/>
            <person name="Bult C.J."/>
            <person name="Agarwala R."/>
            <person name="Cherry J.L."/>
            <person name="DiCuccio M."/>
            <person name="Hlavina W."/>
            <person name="Kapustin Y."/>
            <person name="Meric P."/>
            <person name="Maglott D."/>
            <person name="Birtle Z."/>
            <person name="Marques A.C."/>
            <person name="Graves T."/>
            <person name="Zhou S."/>
            <person name="Teague B."/>
            <person name="Potamousis K."/>
            <person name="Churas C."/>
            <person name="Place M."/>
            <person name="Herschleb J."/>
            <person name="Runnheim R."/>
            <person name="Forrest D."/>
            <person name="Amos-Landgraf J."/>
            <person name="Schwartz D.C."/>
            <person name="Cheng Z."/>
            <person name="Lindblad-Toh K."/>
            <person name="Eichler E.E."/>
            <person name="Ponting C.P."/>
        </authorList>
    </citation>
    <scope>NUCLEOTIDE SEQUENCE [LARGE SCALE GENOMIC DNA]</scope>
    <source>
        <strain>C57BL/6J</strain>
    </source>
</reference>
<reference key="3">
    <citation type="journal article" date="2000" name="FEBS Lett.">
        <title>Deficiency of a STE20/PAK family kinase LOK leads to the acceleration of LFA-1 clustering and cell adhesion of activated lymphocytes.</title>
        <authorList>
            <person name="Endo J."/>
            <person name="Toyama-Sorimachi N."/>
            <person name="Taya C."/>
            <person name="Kuramochi-Miyagawa S."/>
            <person name="Nagata K."/>
            <person name="Kuida K."/>
            <person name="Takashi T."/>
            <person name="Yonekawa H."/>
            <person name="Yoshizawa Y."/>
            <person name="Miyasaka N."/>
            <person name="Karasuyama H."/>
        </authorList>
    </citation>
    <scope>DISRUPTION PHENOTYPE</scope>
</reference>
<reference key="4">
    <citation type="journal article" date="2009" name="Immunity">
        <title>The phagosomal proteome in interferon-gamma-activated macrophages.</title>
        <authorList>
            <person name="Trost M."/>
            <person name="English L."/>
            <person name="Lemieux S."/>
            <person name="Courcelles M."/>
            <person name="Desjardins M."/>
            <person name="Thibault P."/>
        </authorList>
    </citation>
    <scope>IDENTIFICATION BY MASS SPECTROMETRY [LARGE SCALE ANALYSIS]</scope>
</reference>
<reference key="5">
    <citation type="journal article" date="2009" name="Mol. Cell. Proteomics">
        <title>Large scale localization of protein phosphorylation by use of electron capture dissociation mass spectrometry.</title>
        <authorList>
            <person name="Sweet S.M."/>
            <person name="Bailey C.M."/>
            <person name="Cunningham D.L."/>
            <person name="Heath J.K."/>
            <person name="Cooper H.J."/>
        </authorList>
    </citation>
    <scope>PHOSPHORYLATION [LARGE SCALE ANALYSIS] AT THR-950</scope>
    <scope>IDENTIFICATION BY MASS SPECTROMETRY [LARGE SCALE ANALYSIS]</scope>
    <source>
        <tissue>Embryonic fibroblast</tissue>
    </source>
</reference>
<reference key="6">
    <citation type="journal article" date="2009" name="Proc. Natl. Acad. Sci. U.S.A.">
        <title>LOK is a major ERM kinase in resting lymphocytes and regulates cytoskeletal rearrangement through ERM phosphorylation.</title>
        <authorList>
            <person name="Belkina N.V."/>
            <person name="Liu Y."/>
            <person name="Hao J.J."/>
            <person name="Karasuyama H."/>
            <person name="Shaw S."/>
        </authorList>
    </citation>
    <scope>FUNCTION</scope>
    <scope>DISRUPTION PHENOTYPE</scope>
</reference>
<reference key="7">
    <citation type="journal article" date="2010" name="Cell">
        <title>A tissue-specific atlas of mouse protein phosphorylation and expression.</title>
        <authorList>
            <person name="Huttlin E.L."/>
            <person name="Jedrychowski M.P."/>
            <person name="Elias J.E."/>
            <person name="Goswami T."/>
            <person name="Rad R."/>
            <person name="Beausoleil S.A."/>
            <person name="Villen J."/>
            <person name="Haas W."/>
            <person name="Sowa M.E."/>
            <person name="Gygi S.P."/>
        </authorList>
    </citation>
    <scope>PHOSPHORYLATION [LARGE SCALE ANALYSIS] AT SER-191; SER-449; SER-453 AND THR-950</scope>
    <scope>IDENTIFICATION BY MASS SPECTROMETRY [LARGE SCALE ANALYSIS]</scope>
    <source>
        <tissue>Brown adipose tissue</tissue>
        <tissue>Kidney</tissue>
        <tissue>Lung</tissue>
        <tissue>Pancreas</tissue>
        <tissue>Spleen</tissue>
        <tissue>Testis</tissue>
    </source>
</reference>
<keyword id="KW-0067">ATP-binding</keyword>
<keyword id="KW-0131">Cell cycle</keyword>
<keyword id="KW-1003">Cell membrane</keyword>
<keyword id="KW-0175">Coiled coil</keyword>
<keyword id="KW-0418">Kinase</keyword>
<keyword id="KW-0472">Membrane</keyword>
<keyword id="KW-0547">Nucleotide-binding</keyword>
<keyword id="KW-0597">Phosphoprotein</keyword>
<keyword id="KW-1185">Reference proteome</keyword>
<keyword id="KW-0723">Serine/threonine-protein kinase</keyword>
<keyword id="KW-0808">Transferase</keyword>